<dbReference type="EC" id="3.2.1.15"/>
<dbReference type="EMBL" id="AM270345">
    <property type="protein sequence ID" value="CAK42510.1"/>
    <property type="molecule type" value="Genomic_DNA"/>
</dbReference>
<dbReference type="RefSeq" id="XP_001397067.1">
    <property type="nucleotide sequence ID" value="XM_001397030.1"/>
</dbReference>
<dbReference type="SMR" id="A2R5S4"/>
<dbReference type="CAZy" id="GH28">
    <property type="family name" value="Glycoside Hydrolase Family 28"/>
</dbReference>
<dbReference type="GlyCosmos" id="A2R5S4">
    <property type="glycosylation" value="1 site, No reported glycans"/>
</dbReference>
<dbReference type="EnsemblFungi" id="CAK42510">
    <property type="protein sequence ID" value="CAK42510"/>
    <property type="gene ID" value="An15g05370"/>
</dbReference>
<dbReference type="GeneID" id="4988138"/>
<dbReference type="KEGG" id="ang:An15g05370"/>
<dbReference type="VEuPathDB" id="FungiDB:An15g05370"/>
<dbReference type="HOGENOM" id="CLU_040116_0_0_1"/>
<dbReference type="Proteomes" id="UP000006706">
    <property type="component" value="Chromosome 3R"/>
</dbReference>
<dbReference type="GO" id="GO:0005576">
    <property type="term" value="C:extracellular region"/>
    <property type="evidence" value="ECO:0000250"/>
    <property type="project" value="UniProtKB"/>
</dbReference>
<dbReference type="GO" id="GO:0004650">
    <property type="term" value="F:polygalacturonase activity"/>
    <property type="evidence" value="ECO:0000250"/>
    <property type="project" value="UniProtKB"/>
</dbReference>
<dbReference type="GO" id="GO:0071555">
    <property type="term" value="P:cell wall organization"/>
    <property type="evidence" value="ECO:0007669"/>
    <property type="project" value="UniProtKB-KW"/>
</dbReference>
<dbReference type="GO" id="GO:0045490">
    <property type="term" value="P:pectin catabolic process"/>
    <property type="evidence" value="ECO:0000250"/>
    <property type="project" value="UniProtKB"/>
</dbReference>
<dbReference type="FunFam" id="2.160.20.10:FF:000002">
    <property type="entry name" value="Endopolygalacturonase D"/>
    <property type="match status" value="1"/>
</dbReference>
<dbReference type="Gene3D" id="2.160.20.10">
    <property type="entry name" value="Single-stranded right-handed beta-helix, Pectin lyase-like"/>
    <property type="match status" value="1"/>
</dbReference>
<dbReference type="InterPro" id="IPR000743">
    <property type="entry name" value="Glyco_hydro_28"/>
</dbReference>
<dbReference type="InterPro" id="IPR050434">
    <property type="entry name" value="Glycosyl_hydrlase_28"/>
</dbReference>
<dbReference type="InterPro" id="IPR006626">
    <property type="entry name" value="PbH1"/>
</dbReference>
<dbReference type="InterPro" id="IPR012334">
    <property type="entry name" value="Pectin_lyas_fold"/>
</dbReference>
<dbReference type="InterPro" id="IPR011050">
    <property type="entry name" value="Pectin_lyase_fold/virulence"/>
</dbReference>
<dbReference type="PANTHER" id="PTHR31884:SF13">
    <property type="entry name" value="ENDOPOLYGALACTURONASE B"/>
    <property type="match status" value="1"/>
</dbReference>
<dbReference type="PANTHER" id="PTHR31884">
    <property type="entry name" value="POLYGALACTURONASE"/>
    <property type="match status" value="1"/>
</dbReference>
<dbReference type="Pfam" id="PF00295">
    <property type="entry name" value="Glyco_hydro_28"/>
    <property type="match status" value="1"/>
</dbReference>
<dbReference type="SMART" id="SM00710">
    <property type="entry name" value="PbH1"/>
    <property type="match status" value="5"/>
</dbReference>
<dbReference type="SUPFAM" id="SSF51126">
    <property type="entry name" value="Pectin lyase-like"/>
    <property type="match status" value="1"/>
</dbReference>
<dbReference type="PROSITE" id="PS00502">
    <property type="entry name" value="POLYGALACTURONASE"/>
    <property type="match status" value="1"/>
</dbReference>
<reference key="1">
    <citation type="journal article" date="2007" name="Nat. Biotechnol.">
        <title>Genome sequencing and analysis of the versatile cell factory Aspergillus niger CBS 513.88.</title>
        <authorList>
            <person name="Pel H.J."/>
            <person name="de Winde J.H."/>
            <person name="Archer D.B."/>
            <person name="Dyer P.S."/>
            <person name="Hofmann G."/>
            <person name="Schaap P.J."/>
            <person name="Turner G."/>
            <person name="de Vries R.P."/>
            <person name="Albang R."/>
            <person name="Albermann K."/>
            <person name="Andersen M.R."/>
            <person name="Bendtsen J.D."/>
            <person name="Benen J.A.E."/>
            <person name="van den Berg M."/>
            <person name="Breestraat S."/>
            <person name="Caddick M.X."/>
            <person name="Contreras R."/>
            <person name="Cornell M."/>
            <person name="Coutinho P.M."/>
            <person name="Danchin E.G.J."/>
            <person name="Debets A.J.M."/>
            <person name="Dekker P."/>
            <person name="van Dijck P.W.M."/>
            <person name="van Dijk A."/>
            <person name="Dijkhuizen L."/>
            <person name="Driessen A.J.M."/>
            <person name="d'Enfert C."/>
            <person name="Geysens S."/>
            <person name="Goosen C."/>
            <person name="Groot G.S.P."/>
            <person name="de Groot P.W.J."/>
            <person name="Guillemette T."/>
            <person name="Henrissat B."/>
            <person name="Herweijer M."/>
            <person name="van den Hombergh J.P.T.W."/>
            <person name="van den Hondel C.A.M.J.J."/>
            <person name="van der Heijden R.T.J.M."/>
            <person name="van der Kaaij R.M."/>
            <person name="Klis F.M."/>
            <person name="Kools H.J."/>
            <person name="Kubicek C.P."/>
            <person name="van Kuyk P.A."/>
            <person name="Lauber J."/>
            <person name="Lu X."/>
            <person name="van der Maarel M.J.E.C."/>
            <person name="Meulenberg R."/>
            <person name="Menke H."/>
            <person name="Mortimer M.A."/>
            <person name="Nielsen J."/>
            <person name="Oliver S.G."/>
            <person name="Olsthoorn M."/>
            <person name="Pal K."/>
            <person name="van Peij N.N.M.E."/>
            <person name="Ram A.F.J."/>
            <person name="Rinas U."/>
            <person name="Roubos J.A."/>
            <person name="Sagt C.M.J."/>
            <person name="Schmoll M."/>
            <person name="Sun J."/>
            <person name="Ussery D."/>
            <person name="Varga J."/>
            <person name="Vervecken W."/>
            <person name="van de Vondervoort P.J.J."/>
            <person name="Wedler H."/>
            <person name="Woesten H.A.B."/>
            <person name="Zeng A.-P."/>
            <person name="van Ooyen A.J.J."/>
            <person name="Visser J."/>
            <person name="Stam H."/>
        </authorList>
    </citation>
    <scope>NUCLEOTIDE SEQUENCE [LARGE SCALE GENOMIC DNA]</scope>
    <source>
        <strain>ATCC MYA-4892 / CBS 513.88 / FGSC A1513</strain>
    </source>
</reference>
<accession>A2R5S4</accession>
<comment type="function">
    <text evidence="1">Involved in maceration and soft-rotting of plant tissue. Hydrolyzes the 1,4-alpha glycosidic bonds of de-esterified pectate in the smooth region of the plant cell wall (By similarity).</text>
</comment>
<comment type="catalytic activity">
    <reaction>
        <text>(1,4-alpha-D-galacturonosyl)n+m + H2O = (1,4-alpha-D-galacturonosyl)n + (1,4-alpha-D-galacturonosyl)m.</text>
        <dbReference type="EC" id="3.2.1.15"/>
    </reaction>
</comment>
<comment type="subcellular location">
    <subcellularLocation>
        <location evidence="1">Secreted</location>
    </subcellularLocation>
</comment>
<comment type="similarity">
    <text evidence="4">Belongs to the glycosyl hydrolase 28 family.</text>
</comment>
<feature type="signal peptide" evidence="2">
    <location>
        <begin position="1"/>
        <end position="21"/>
    </location>
</feature>
<feature type="propeptide" id="PRO_0000393632" evidence="2">
    <location>
        <begin position="22"/>
        <end position="27"/>
    </location>
</feature>
<feature type="chain" id="PRO_5000221069" description="Probable endopolygalacturonase II">
    <location>
        <begin position="28"/>
        <end position="362"/>
    </location>
</feature>
<feature type="repeat" description="PbH1 1">
    <location>
        <begin position="156"/>
        <end position="186"/>
    </location>
</feature>
<feature type="repeat" description="PbH1 2">
    <location>
        <begin position="209"/>
        <end position="229"/>
    </location>
</feature>
<feature type="repeat" description="PbH1 3">
    <location>
        <begin position="238"/>
        <end position="259"/>
    </location>
</feature>
<feature type="repeat" description="PbH1 4">
    <location>
        <begin position="267"/>
        <end position="289"/>
    </location>
</feature>
<feature type="repeat" description="PbH1 5">
    <location>
        <begin position="301"/>
        <end position="322"/>
    </location>
</feature>
<feature type="active site" description="Proton donor" evidence="3">
    <location>
        <position position="201"/>
    </location>
</feature>
<feature type="active site" evidence="3">
    <location>
        <position position="223"/>
    </location>
</feature>
<feature type="glycosylation site" description="N-linked (GlcNAc...) asparagine" evidence="2">
    <location>
        <position position="240"/>
    </location>
</feature>
<feature type="disulfide bond" evidence="1">
    <location>
        <begin position="30"/>
        <end position="45"/>
    </location>
</feature>
<feature type="disulfide bond" evidence="1">
    <location>
        <begin position="203"/>
        <end position="219"/>
    </location>
</feature>
<feature type="disulfide bond" evidence="1">
    <location>
        <begin position="329"/>
        <end position="334"/>
    </location>
</feature>
<feature type="disulfide bond" evidence="1">
    <location>
        <begin position="353"/>
        <end position="362"/>
    </location>
</feature>
<evidence type="ECO:0000250" key="1"/>
<evidence type="ECO:0000255" key="2"/>
<evidence type="ECO:0000255" key="3">
    <source>
        <dbReference type="PROSITE-ProRule" id="PRU10052"/>
    </source>
</evidence>
<evidence type="ECO:0000305" key="4"/>
<organism>
    <name type="scientific">Aspergillus niger (strain ATCC MYA-4892 / CBS 513.88 / FGSC A1513)</name>
    <dbReference type="NCBI Taxonomy" id="425011"/>
    <lineage>
        <taxon>Eukaryota</taxon>
        <taxon>Fungi</taxon>
        <taxon>Dikarya</taxon>
        <taxon>Ascomycota</taxon>
        <taxon>Pezizomycotina</taxon>
        <taxon>Eurotiomycetes</taxon>
        <taxon>Eurotiomycetidae</taxon>
        <taxon>Eurotiales</taxon>
        <taxon>Aspergillaceae</taxon>
        <taxon>Aspergillus</taxon>
        <taxon>Aspergillus subgen. Circumdati</taxon>
    </lineage>
</organism>
<name>PGLR2_ASPNC</name>
<gene>
    <name type="primary">pgaII</name>
    <name type="synonym">pg2</name>
    <name type="ORF">An15g05370</name>
</gene>
<protein>
    <recommendedName>
        <fullName>Probable endopolygalacturonase II</fullName>
        <shortName>EPG-II</shortName>
        <ecNumber>3.2.1.15</ecNumber>
    </recommendedName>
    <alternativeName>
        <fullName>Pectinase 2</fullName>
    </alternativeName>
    <alternativeName>
        <fullName>Polygalacturonase II</fullName>
        <shortName>PG-II</shortName>
    </alternativeName>
    <alternativeName>
        <fullName>Polygalacturonase X2</fullName>
    </alternativeName>
</protein>
<sequence>MHSFASLLAYGLVAGATFASASPIEARDSCTFTTAAAAKAGKAKCSTITLNNIEVPAGTTLDLTGLTSGTKVIFEGTTTFQYEEWAGPLISMSGEHITVTGASGHLINCDGARWWDGKGTSGKKKPKFFYAHGLDSSSITGLNIKNTPLMAFSVQANDITFTDVTINNADGDTQGGHNTDAFDVGNSVGVNIIKPWVHNQDDCLAVNSGENIWFTGGTCIGGHGLSIGSVGDRSNNVVKNVTIEHSTVSNSENAVRIKTISGATGSVSEITYSNIVMSGISDYGVVIQQDYEDGKPTGKPTNGVTIQDVKLESVTGSVDSGATEIYLLCGSGSCSDWTWDDVKVTGGKKSTACKNFPSVASC</sequence>
<keyword id="KW-0961">Cell wall biogenesis/degradation</keyword>
<keyword id="KW-1015">Disulfide bond</keyword>
<keyword id="KW-0325">Glycoprotein</keyword>
<keyword id="KW-0326">Glycosidase</keyword>
<keyword id="KW-0378">Hydrolase</keyword>
<keyword id="KW-1185">Reference proteome</keyword>
<keyword id="KW-0677">Repeat</keyword>
<keyword id="KW-0964">Secreted</keyword>
<keyword id="KW-0732">Signal</keyword>
<keyword id="KW-0865">Zymogen</keyword>
<proteinExistence type="inferred from homology"/>